<proteinExistence type="inferred from homology"/>
<keyword id="KW-0274">FAD</keyword>
<keyword id="KW-0285">Flavoprotein</keyword>
<keyword id="KW-0520">NAD</keyword>
<keyword id="KW-0560">Oxidoreductase</keyword>
<accession>B6I074</accession>
<sequence length="556" mass="61848">MQFDYIIIGAGSAGNVLATRLTEDPNTSVLLLEAGGPDYRFDFRTQMPAALAFPLQGKRYNWAYETEPEPFMNNRRMECGRGKGLGGSSLINGMCYIRGNALDLDNWAQEPGLENWSYLDCLPYYRKAETRDVGENDYHGGDGPVSVTTSKPGVNPLFEAMIEAGVQAGYPRTDDLNGYQQEGFGPMDRTVTPQGRRASTARGYLDQAKSRPNLTIRTHAMTDHIIFDGKRAVGVEWLEGDSTIPTRATANKEVLLCAGAIASPQILQRSGVGNAELLAEFDIPLVHELPGVGENLQDHLEMYLQYECKEPVSLYPALQWWNQPKIGAEWLFGGTGVGASNHFEAGGFIRSREEFAWPNIQYHFLPVAINYNGSNAVKEHGFQCHVGSMRSPSRGHVRIKSRDPHQHPAILFNYMSHEQDWQEFRDAIRITREIMHQPALDQYRGREISPGTECQTDEQLDEFVRNHAETAFHPCGTCKMGYDEMSVVDGEGRVHGLEGLRVVDASIMPQIITGNLNATTIMIGEKIADMIRGQEALPRSTAGYFVANGMPVRAKK</sequence>
<feature type="chain" id="PRO_1000133331" description="Oxygen-dependent choline dehydrogenase">
    <location>
        <begin position="1"/>
        <end position="556"/>
    </location>
</feature>
<feature type="active site" description="Proton acceptor" evidence="1">
    <location>
        <position position="473"/>
    </location>
</feature>
<feature type="binding site" evidence="1">
    <location>
        <begin position="4"/>
        <end position="33"/>
    </location>
    <ligand>
        <name>FAD</name>
        <dbReference type="ChEBI" id="CHEBI:57692"/>
    </ligand>
</feature>
<protein>
    <recommendedName>
        <fullName evidence="1">Oxygen-dependent choline dehydrogenase</fullName>
        <shortName evidence="1">CDH</shortName>
        <shortName evidence="1">CHD</shortName>
        <ecNumber evidence="1">1.1.99.1</ecNumber>
    </recommendedName>
    <alternativeName>
        <fullName evidence="1">Betaine aldehyde dehydrogenase</fullName>
        <shortName evidence="1">BADH</shortName>
        <ecNumber evidence="1">1.2.1.8</ecNumber>
    </alternativeName>
</protein>
<gene>
    <name evidence="1" type="primary">betA</name>
    <name type="ordered locus">ECSE_0332</name>
</gene>
<comment type="function">
    <text evidence="1">Involved in the biosynthesis of the osmoprotectant glycine betaine. Catalyzes the oxidation of choline to betaine aldehyde and betaine aldehyde to glycine betaine at the same rate.</text>
</comment>
<comment type="catalytic activity">
    <reaction evidence="1">
        <text>choline + A = betaine aldehyde + AH2</text>
        <dbReference type="Rhea" id="RHEA:17433"/>
        <dbReference type="ChEBI" id="CHEBI:13193"/>
        <dbReference type="ChEBI" id="CHEBI:15354"/>
        <dbReference type="ChEBI" id="CHEBI:15710"/>
        <dbReference type="ChEBI" id="CHEBI:17499"/>
        <dbReference type="EC" id="1.1.99.1"/>
    </reaction>
</comment>
<comment type="catalytic activity">
    <reaction evidence="1">
        <text>betaine aldehyde + NAD(+) + H2O = glycine betaine + NADH + 2 H(+)</text>
        <dbReference type="Rhea" id="RHEA:15305"/>
        <dbReference type="ChEBI" id="CHEBI:15377"/>
        <dbReference type="ChEBI" id="CHEBI:15378"/>
        <dbReference type="ChEBI" id="CHEBI:15710"/>
        <dbReference type="ChEBI" id="CHEBI:17750"/>
        <dbReference type="ChEBI" id="CHEBI:57540"/>
        <dbReference type="ChEBI" id="CHEBI:57945"/>
        <dbReference type="EC" id="1.2.1.8"/>
    </reaction>
</comment>
<comment type="cofactor">
    <cofactor evidence="1">
        <name>FAD</name>
        <dbReference type="ChEBI" id="CHEBI:57692"/>
    </cofactor>
</comment>
<comment type="pathway">
    <text evidence="1">Amine and polyamine biosynthesis; betaine biosynthesis via choline pathway; betaine aldehyde from choline (cytochrome c reductase route): step 1/1.</text>
</comment>
<comment type="similarity">
    <text evidence="1">Belongs to the GMC oxidoreductase family.</text>
</comment>
<name>BETA_ECOSE</name>
<reference key="1">
    <citation type="journal article" date="2008" name="DNA Res.">
        <title>Complete genome sequence and comparative analysis of the wild-type commensal Escherichia coli strain SE11 isolated from a healthy adult.</title>
        <authorList>
            <person name="Oshima K."/>
            <person name="Toh H."/>
            <person name="Ogura Y."/>
            <person name="Sasamoto H."/>
            <person name="Morita H."/>
            <person name="Park S.-H."/>
            <person name="Ooka T."/>
            <person name="Iyoda S."/>
            <person name="Taylor T.D."/>
            <person name="Hayashi T."/>
            <person name="Itoh K."/>
            <person name="Hattori M."/>
        </authorList>
    </citation>
    <scope>NUCLEOTIDE SEQUENCE [LARGE SCALE GENOMIC DNA]</scope>
    <source>
        <strain>SE11</strain>
    </source>
</reference>
<organism>
    <name type="scientific">Escherichia coli (strain SE11)</name>
    <dbReference type="NCBI Taxonomy" id="409438"/>
    <lineage>
        <taxon>Bacteria</taxon>
        <taxon>Pseudomonadati</taxon>
        <taxon>Pseudomonadota</taxon>
        <taxon>Gammaproteobacteria</taxon>
        <taxon>Enterobacterales</taxon>
        <taxon>Enterobacteriaceae</taxon>
        <taxon>Escherichia</taxon>
    </lineage>
</organism>
<dbReference type="EC" id="1.1.99.1" evidence="1"/>
<dbReference type="EC" id="1.2.1.8" evidence="1"/>
<dbReference type="EMBL" id="AP009240">
    <property type="protein sequence ID" value="BAG75856.1"/>
    <property type="molecule type" value="Genomic_DNA"/>
</dbReference>
<dbReference type="RefSeq" id="WP_001159102.1">
    <property type="nucleotide sequence ID" value="NC_011415.1"/>
</dbReference>
<dbReference type="SMR" id="B6I074"/>
<dbReference type="GeneID" id="75206487"/>
<dbReference type="KEGG" id="ecy:ECSE_0332"/>
<dbReference type="HOGENOM" id="CLU_002865_7_1_6"/>
<dbReference type="UniPathway" id="UPA00529">
    <property type="reaction ID" value="UER00385"/>
</dbReference>
<dbReference type="Proteomes" id="UP000008199">
    <property type="component" value="Chromosome"/>
</dbReference>
<dbReference type="GO" id="GO:0016020">
    <property type="term" value="C:membrane"/>
    <property type="evidence" value="ECO:0007669"/>
    <property type="project" value="TreeGrafter"/>
</dbReference>
<dbReference type="GO" id="GO:0008802">
    <property type="term" value="F:betaine-aldehyde dehydrogenase (NAD+) activity"/>
    <property type="evidence" value="ECO:0007669"/>
    <property type="project" value="UniProtKB-EC"/>
</dbReference>
<dbReference type="GO" id="GO:0008812">
    <property type="term" value="F:choline dehydrogenase activity"/>
    <property type="evidence" value="ECO:0007669"/>
    <property type="project" value="UniProtKB-UniRule"/>
</dbReference>
<dbReference type="GO" id="GO:0050660">
    <property type="term" value="F:flavin adenine dinucleotide binding"/>
    <property type="evidence" value="ECO:0007669"/>
    <property type="project" value="InterPro"/>
</dbReference>
<dbReference type="GO" id="GO:0019285">
    <property type="term" value="P:glycine betaine biosynthetic process from choline"/>
    <property type="evidence" value="ECO:0007669"/>
    <property type="project" value="UniProtKB-UniRule"/>
</dbReference>
<dbReference type="Gene3D" id="3.50.50.60">
    <property type="entry name" value="FAD/NAD(P)-binding domain"/>
    <property type="match status" value="1"/>
</dbReference>
<dbReference type="Gene3D" id="3.30.560.10">
    <property type="entry name" value="Glucose Oxidase, domain 3"/>
    <property type="match status" value="1"/>
</dbReference>
<dbReference type="HAMAP" id="MF_00750">
    <property type="entry name" value="Choline_dehydrogen"/>
    <property type="match status" value="1"/>
</dbReference>
<dbReference type="InterPro" id="IPR011533">
    <property type="entry name" value="BetA"/>
</dbReference>
<dbReference type="InterPro" id="IPR036188">
    <property type="entry name" value="FAD/NAD-bd_sf"/>
</dbReference>
<dbReference type="InterPro" id="IPR012132">
    <property type="entry name" value="GMC_OxRdtase"/>
</dbReference>
<dbReference type="InterPro" id="IPR000172">
    <property type="entry name" value="GMC_OxRdtase_N"/>
</dbReference>
<dbReference type="InterPro" id="IPR007867">
    <property type="entry name" value="GMC_OxRtase_C"/>
</dbReference>
<dbReference type="NCBIfam" id="TIGR01810">
    <property type="entry name" value="betA"/>
    <property type="match status" value="1"/>
</dbReference>
<dbReference type="NCBIfam" id="NF002550">
    <property type="entry name" value="PRK02106.1"/>
    <property type="match status" value="1"/>
</dbReference>
<dbReference type="PANTHER" id="PTHR11552:SF147">
    <property type="entry name" value="CHOLINE DEHYDROGENASE, MITOCHONDRIAL"/>
    <property type="match status" value="1"/>
</dbReference>
<dbReference type="PANTHER" id="PTHR11552">
    <property type="entry name" value="GLUCOSE-METHANOL-CHOLINE GMC OXIDOREDUCTASE"/>
    <property type="match status" value="1"/>
</dbReference>
<dbReference type="Pfam" id="PF05199">
    <property type="entry name" value="GMC_oxred_C"/>
    <property type="match status" value="1"/>
</dbReference>
<dbReference type="Pfam" id="PF00732">
    <property type="entry name" value="GMC_oxred_N"/>
    <property type="match status" value="1"/>
</dbReference>
<dbReference type="PIRSF" id="PIRSF000137">
    <property type="entry name" value="Alcohol_oxidase"/>
    <property type="match status" value="1"/>
</dbReference>
<dbReference type="SUPFAM" id="SSF54373">
    <property type="entry name" value="FAD-linked reductases, C-terminal domain"/>
    <property type="match status" value="1"/>
</dbReference>
<dbReference type="SUPFAM" id="SSF51905">
    <property type="entry name" value="FAD/NAD(P)-binding domain"/>
    <property type="match status" value="1"/>
</dbReference>
<dbReference type="PROSITE" id="PS00623">
    <property type="entry name" value="GMC_OXRED_1"/>
    <property type="match status" value="1"/>
</dbReference>
<dbReference type="PROSITE" id="PS00624">
    <property type="entry name" value="GMC_OXRED_2"/>
    <property type="match status" value="1"/>
</dbReference>
<evidence type="ECO:0000255" key="1">
    <source>
        <dbReference type="HAMAP-Rule" id="MF_00750"/>
    </source>
</evidence>